<name>MAK_MYCTA</name>
<feature type="chain" id="PRO_0000412896" description="Maltokinase">
    <location>
        <begin position="1"/>
        <end position="455"/>
    </location>
</feature>
<keyword id="KW-0067">ATP-binding</keyword>
<keyword id="KW-0119">Carbohydrate metabolism</keyword>
<keyword id="KW-0320">Glycogen biosynthesis</keyword>
<keyword id="KW-0321">Glycogen metabolism</keyword>
<keyword id="KW-0418">Kinase</keyword>
<keyword id="KW-0547">Nucleotide-binding</keyword>
<keyword id="KW-1185">Reference proteome</keyword>
<keyword id="KW-0808">Transferase</keyword>
<proteinExistence type="inferred from homology"/>
<dbReference type="EC" id="2.7.1.175"/>
<dbReference type="EMBL" id="CP000611">
    <property type="protein sequence ID" value="ABQ71852.1"/>
    <property type="molecule type" value="Genomic_DNA"/>
</dbReference>
<dbReference type="RefSeq" id="WP_003916610.1">
    <property type="nucleotide sequence ID" value="NZ_CP016972.1"/>
</dbReference>
<dbReference type="SMR" id="A5TYK2"/>
<dbReference type="KEGG" id="mra:MRA_0134"/>
<dbReference type="eggNOG" id="COG3281">
    <property type="taxonomic scope" value="Bacteria"/>
</dbReference>
<dbReference type="HOGENOM" id="CLU_029675_0_0_11"/>
<dbReference type="UniPathway" id="UPA00164"/>
<dbReference type="Proteomes" id="UP000001988">
    <property type="component" value="Chromosome"/>
</dbReference>
<dbReference type="GO" id="GO:0005524">
    <property type="term" value="F:ATP binding"/>
    <property type="evidence" value="ECO:0007669"/>
    <property type="project" value="UniProtKB-KW"/>
</dbReference>
<dbReference type="GO" id="GO:0016301">
    <property type="term" value="F:kinase activity"/>
    <property type="evidence" value="ECO:0007669"/>
    <property type="project" value="UniProtKB-KW"/>
</dbReference>
<dbReference type="GO" id="GO:0046835">
    <property type="term" value="P:carbohydrate phosphorylation"/>
    <property type="evidence" value="ECO:0000250"/>
    <property type="project" value="UniProtKB"/>
</dbReference>
<dbReference type="GO" id="GO:0005978">
    <property type="term" value="P:glycogen biosynthetic process"/>
    <property type="evidence" value="ECO:0007669"/>
    <property type="project" value="UniProtKB-UniPathway"/>
</dbReference>
<dbReference type="GO" id="GO:0005992">
    <property type="term" value="P:trehalose biosynthetic process"/>
    <property type="evidence" value="ECO:0000250"/>
    <property type="project" value="UniProtKB"/>
</dbReference>
<dbReference type="FunFam" id="3.90.1200.10:FF:000010">
    <property type="entry name" value="Maltokinase"/>
    <property type="match status" value="1"/>
</dbReference>
<dbReference type="Gene3D" id="3.90.1200.10">
    <property type="match status" value="1"/>
</dbReference>
<dbReference type="InterPro" id="IPR011009">
    <property type="entry name" value="Kinase-like_dom_sf"/>
</dbReference>
<dbReference type="InterPro" id="IPR040999">
    <property type="entry name" value="Mak_N_cap"/>
</dbReference>
<dbReference type="Pfam" id="PF18085">
    <property type="entry name" value="Mak_N_cap"/>
    <property type="match status" value="1"/>
</dbReference>
<dbReference type="SUPFAM" id="SSF56112">
    <property type="entry name" value="Protein kinase-like (PK-like)"/>
    <property type="match status" value="1"/>
</dbReference>
<reference key="1">
    <citation type="journal article" date="2008" name="PLoS ONE">
        <title>Genetic basis of virulence attenuation revealed by comparative genomic analysis of Mycobacterium tuberculosis strain H37Ra versus H37Rv.</title>
        <authorList>
            <person name="Zheng H."/>
            <person name="Lu L."/>
            <person name="Wang B."/>
            <person name="Pu S."/>
            <person name="Zhang X."/>
            <person name="Zhu G."/>
            <person name="Shi W."/>
            <person name="Zhang L."/>
            <person name="Wang H."/>
            <person name="Wang S."/>
            <person name="Zhao G."/>
            <person name="Zhang Y."/>
        </authorList>
    </citation>
    <scope>NUCLEOTIDE SEQUENCE [LARGE SCALE GENOMIC DNA]</scope>
    <source>
        <strain>ATCC 25177 / H37Ra</strain>
    </source>
</reference>
<protein>
    <recommendedName>
        <fullName>Maltokinase</fullName>
        <shortName>MaK</shortName>
        <ecNumber>2.7.1.175</ecNumber>
    </recommendedName>
    <alternativeName>
        <fullName>Maltose-1-phosphate synthase</fullName>
    </alternativeName>
</protein>
<sequence>MTRSDTLATKLPWSDWLSRQRWYAGRNRELATVKPGVVVALRHNLDLVLVDVTYTDGATERYQVLVGWDFEPASEYGTKAAIGVADDRTGFDALYDVAGPQFLLSLIVSSAVCGTSTGEVTFTREPDVELPFAAQPRVCDAEQSNTSVIFDRRAILKVFRRVSSGINPDIELNRVLTRAGNPHVARLLGAYQFGRPNRSPTDALAYALGMVTEYEANAAEGWAMATASVRDLFAEGDLYAHEVGGDFAGESYRLGEAVASVHATLADSLGTAQATFPVDRMLARLSSTVAVVPELREYAPTIEQQFQKLAAEAITVQRVHGDLHLGQVLRTPESWLLIDFEGEPGQPLDERRAPDSPLRDVAGVLRSFEYAAYGPLVDQATDKQLAARAREWVERNRAAFCDGYAVASGIDPRDSALLLGAYELDKAVYETGYETRHRPGWLPIPLRSIARLTAS</sequence>
<gene>
    <name type="primary">mak</name>
    <name type="ordered locus">MRA_0134</name>
</gene>
<evidence type="ECO:0000250" key="1"/>
<evidence type="ECO:0000305" key="2"/>
<organism>
    <name type="scientific">Mycobacterium tuberculosis (strain ATCC 25177 / H37Ra)</name>
    <dbReference type="NCBI Taxonomy" id="419947"/>
    <lineage>
        <taxon>Bacteria</taxon>
        <taxon>Bacillati</taxon>
        <taxon>Actinomycetota</taxon>
        <taxon>Actinomycetes</taxon>
        <taxon>Mycobacteriales</taxon>
        <taxon>Mycobacteriaceae</taxon>
        <taxon>Mycobacterium</taxon>
        <taxon>Mycobacterium tuberculosis complex</taxon>
    </lineage>
</organism>
<comment type="function">
    <text evidence="1">Catalyzes the ATP-dependent phosphorylation of maltose to maltose 1-phosphate. Is involved in a branched alpha-glucan biosynthetic pathway from trehalose, together with TreS, GlgE and GlgB (By similarity).</text>
</comment>
<comment type="catalytic activity">
    <reaction>
        <text>D-maltose + ATP = alpha-maltose 1-phosphate + ADP + H(+)</text>
        <dbReference type="Rhea" id="RHEA:31915"/>
        <dbReference type="ChEBI" id="CHEBI:15378"/>
        <dbReference type="ChEBI" id="CHEBI:17306"/>
        <dbReference type="ChEBI" id="CHEBI:30616"/>
        <dbReference type="ChEBI" id="CHEBI:63576"/>
        <dbReference type="ChEBI" id="CHEBI:456216"/>
        <dbReference type="EC" id="2.7.1.175"/>
    </reaction>
</comment>
<comment type="pathway">
    <text>Glycan biosynthesis; glycogen biosynthesis.</text>
</comment>
<comment type="subunit">
    <text evidence="1">Monomer.</text>
</comment>
<comment type="similarity">
    <text evidence="2">Belongs to the aminoglycoside phosphotransferase family.</text>
</comment>
<accession>A5TYK2</accession>